<reference key="1">
    <citation type="journal article" date="2004" name="Science">
        <title>Illuminating the evolutionary history of chlamydiae.</title>
        <authorList>
            <person name="Horn M."/>
            <person name="Collingro A."/>
            <person name="Schmitz-Esser S."/>
            <person name="Beier C.L."/>
            <person name="Purkhold U."/>
            <person name="Fartmann B."/>
            <person name="Brandt P."/>
            <person name="Nyakatura G.J."/>
            <person name="Droege M."/>
            <person name="Frishman D."/>
            <person name="Rattei T."/>
            <person name="Mewes H.-W."/>
            <person name="Wagner M."/>
        </authorList>
    </citation>
    <scope>NUCLEOTIDE SEQUENCE [LARGE SCALE GENOMIC DNA]</scope>
    <source>
        <strain>UWE25</strain>
    </source>
</reference>
<accession>Q6MFA3</accession>
<protein>
    <recommendedName>
        <fullName evidence="1">tRNA modification GTPase MnmE</fullName>
        <ecNumber evidence="1">3.6.-.-</ecNumber>
    </recommendedName>
</protein>
<keyword id="KW-0963">Cytoplasm</keyword>
<keyword id="KW-0342">GTP-binding</keyword>
<keyword id="KW-0378">Hydrolase</keyword>
<keyword id="KW-0460">Magnesium</keyword>
<keyword id="KW-0479">Metal-binding</keyword>
<keyword id="KW-0547">Nucleotide-binding</keyword>
<keyword id="KW-0630">Potassium</keyword>
<keyword id="KW-1185">Reference proteome</keyword>
<keyword id="KW-0819">tRNA processing</keyword>
<comment type="function">
    <text evidence="1">Exhibits a very high intrinsic GTPase hydrolysis rate. Involved in the addition of a carboxymethylaminomethyl (cmnm) group at the wobble position (U34) of certain tRNAs, forming tRNA-cmnm(5)s(2)U34.</text>
</comment>
<comment type="cofactor">
    <cofactor evidence="1">
        <name>K(+)</name>
        <dbReference type="ChEBI" id="CHEBI:29103"/>
    </cofactor>
    <text evidence="1">Binds 1 potassium ion per subunit.</text>
</comment>
<comment type="subunit">
    <text evidence="1">Homodimer. Heterotetramer of two MnmE and two MnmG subunits.</text>
</comment>
<comment type="subcellular location">
    <subcellularLocation>
        <location evidence="1">Cytoplasm</location>
    </subcellularLocation>
</comment>
<comment type="similarity">
    <text evidence="1">Belongs to the TRAFAC class TrmE-Era-EngA-EngB-Septin-like GTPase superfamily. TrmE GTPase family.</text>
</comment>
<organism>
    <name type="scientific">Protochlamydia amoebophila (strain UWE25)</name>
    <dbReference type="NCBI Taxonomy" id="264201"/>
    <lineage>
        <taxon>Bacteria</taxon>
        <taxon>Pseudomonadati</taxon>
        <taxon>Chlamydiota</taxon>
        <taxon>Chlamydiia</taxon>
        <taxon>Parachlamydiales</taxon>
        <taxon>Parachlamydiaceae</taxon>
        <taxon>Candidatus Protochlamydia</taxon>
    </lineage>
</organism>
<sequence>MEFIHQPYYPGETIAAIATPPGEGGVAIIRISGDQSLEVAAKIFSGPIFSYRSHTAHYGQIYNSSGEHVDDVLVLIMLGKRSYTGENTVEIHCHGGSLITRKVLEVVLAAGARAALPGEFTFKAYMNGKIDLAQAEAVQELICAKNEKALGAAESQLKGSLSNRVLAFQSTLTQIAAILEAWVDFPEEGLEFATMDELDQDLERTAKDMEKLVNSFHNGKILHDGLSICLIGCPNVGKSSLMNALLDKDRAIVSPIPGTTRDVLEDHLRLNGLHIKLSDTAGIREANESVEQEGIRRSKKAMQEADLILLVLDAHKGLEKEDQELLKQVPFHKTIVIWNKIDLNPRNLPCLEVPFLVHLSAKEKIGLEELHQTIDTIIWQDGPPSKEEILITNVRHKEALIESIESLRRVKIGLRHQVSPEFLTLDMRQSLLELGKIIGTNISEDILSAIFSKFCIGK</sequence>
<gene>
    <name evidence="1" type="primary">mnmE</name>
    <name evidence="1" type="synonym">trmE</name>
    <name type="ordered locus">pc0022</name>
</gene>
<feature type="chain" id="PRO_0000345873" description="tRNA modification GTPase MnmE">
    <location>
        <begin position="1"/>
        <end position="458"/>
    </location>
</feature>
<feature type="domain" description="TrmE-type G">
    <location>
        <begin position="225"/>
        <end position="379"/>
    </location>
</feature>
<feature type="binding site" evidence="1">
    <location>
        <position position="30"/>
    </location>
    <ligand>
        <name>(6S)-5-formyl-5,6,7,8-tetrahydrofolate</name>
        <dbReference type="ChEBI" id="CHEBI:57457"/>
    </ligand>
</feature>
<feature type="binding site" evidence="1">
    <location>
        <position position="90"/>
    </location>
    <ligand>
        <name>(6S)-5-formyl-5,6,7,8-tetrahydrofolate</name>
        <dbReference type="ChEBI" id="CHEBI:57457"/>
    </ligand>
</feature>
<feature type="binding site" evidence="1">
    <location>
        <position position="129"/>
    </location>
    <ligand>
        <name>(6S)-5-formyl-5,6,7,8-tetrahydrofolate</name>
        <dbReference type="ChEBI" id="CHEBI:57457"/>
    </ligand>
</feature>
<feature type="binding site" evidence="1">
    <location>
        <begin position="235"/>
        <end position="240"/>
    </location>
    <ligand>
        <name>GTP</name>
        <dbReference type="ChEBI" id="CHEBI:37565"/>
    </ligand>
</feature>
<feature type="binding site" evidence="1">
    <location>
        <position position="235"/>
    </location>
    <ligand>
        <name>K(+)</name>
        <dbReference type="ChEBI" id="CHEBI:29103"/>
    </ligand>
</feature>
<feature type="binding site" evidence="1">
    <location>
        <position position="239"/>
    </location>
    <ligand>
        <name>Mg(2+)</name>
        <dbReference type="ChEBI" id="CHEBI:18420"/>
    </ligand>
</feature>
<feature type="binding site" evidence="1">
    <location>
        <begin position="254"/>
        <end position="260"/>
    </location>
    <ligand>
        <name>GTP</name>
        <dbReference type="ChEBI" id="CHEBI:37565"/>
    </ligand>
</feature>
<feature type="binding site" evidence="1">
    <location>
        <position position="254"/>
    </location>
    <ligand>
        <name>K(+)</name>
        <dbReference type="ChEBI" id="CHEBI:29103"/>
    </ligand>
</feature>
<feature type="binding site" evidence="1">
    <location>
        <position position="256"/>
    </location>
    <ligand>
        <name>K(+)</name>
        <dbReference type="ChEBI" id="CHEBI:29103"/>
    </ligand>
</feature>
<feature type="binding site" evidence="1">
    <location>
        <position position="259"/>
    </location>
    <ligand>
        <name>K(+)</name>
        <dbReference type="ChEBI" id="CHEBI:29103"/>
    </ligand>
</feature>
<feature type="binding site" evidence="1">
    <location>
        <position position="260"/>
    </location>
    <ligand>
        <name>Mg(2+)</name>
        <dbReference type="ChEBI" id="CHEBI:18420"/>
    </ligand>
</feature>
<feature type="binding site" evidence="1">
    <location>
        <begin position="279"/>
        <end position="282"/>
    </location>
    <ligand>
        <name>GTP</name>
        <dbReference type="ChEBI" id="CHEBI:37565"/>
    </ligand>
</feature>
<feature type="binding site" evidence="1">
    <location>
        <position position="458"/>
    </location>
    <ligand>
        <name>(6S)-5-formyl-5,6,7,8-tetrahydrofolate</name>
        <dbReference type="ChEBI" id="CHEBI:57457"/>
    </ligand>
</feature>
<name>MNME_PARUW</name>
<dbReference type="EC" id="3.6.-.-" evidence="1"/>
<dbReference type="EMBL" id="BX908798">
    <property type="protein sequence ID" value="CAF22746.1"/>
    <property type="molecule type" value="Genomic_DNA"/>
</dbReference>
<dbReference type="RefSeq" id="WP_011174572.1">
    <property type="nucleotide sequence ID" value="NC_005861.2"/>
</dbReference>
<dbReference type="SMR" id="Q6MFA3"/>
<dbReference type="STRING" id="264201.pc0022"/>
<dbReference type="KEGG" id="pcu:PC_RS00105"/>
<dbReference type="eggNOG" id="COG0486">
    <property type="taxonomic scope" value="Bacteria"/>
</dbReference>
<dbReference type="HOGENOM" id="CLU_019624_4_1_0"/>
<dbReference type="OrthoDB" id="9805918at2"/>
<dbReference type="Proteomes" id="UP000000529">
    <property type="component" value="Chromosome"/>
</dbReference>
<dbReference type="GO" id="GO:0005829">
    <property type="term" value="C:cytosol"/>
    <property type="evidence" value="ECO:0007669"/>
    <property type="project" value="TreeGrafter"/>
</dbReference>
<dbReference type="GO" id="GO:0005525">
    <property type="term" value="F:GTP binding"/>
    <property type="evidence" value="ECO:0007669"/>
    <property type="project" value="UniProtKB-UniRule"/>
</dbReference>
<dbReference type="GO" id="GO:0003924">
    <property type="term" value="F:GTPase activity"/>
    <property type="evidence" value="ECO:0007669"/>
    <property type="project" value="UniProtKB-UniRule"/>
</dbReference>
<dbReference type="GO" id="GO:0046872">
    <property type="term" value="F:metal ion binding"/>
    <property type="evidence" value="ECO:0007669"/>
    <property type="project" value="UniProtKB-KW"/>
</dbReference>
<dbReference type="GO" id="GO:0030488">
    <property type="term" value="P:tRNA methylation"/>
    <property type="evidence" value="ECO:0007669"/>
    <property type="project" value="TreeGrafter"/>
</dbReference>
<dbReference type="GO" id="GO:0002098">
    <property type="term" value="P:tRNA wobble uridine modification"/>
    <property type="evidence" value="ECO:0007669"/>
    <property type="project" value="TreeGrafter"/>
</dbReference>
<dbReference type="CDD" id="cd04164">
    <property type="entry name" value="trmE"/>
    <property type="match status" value="1"/>
</dbReference>
<dbReference type="CDD" id="cd14858">
    <property type="entry name" value="TrmE_N"/>
    <property type="match status" value="1"/>
</dbReference>
<dbReference type="FunFam" id="3.30.1360.120:FF:000003">
    <property type="entry name" value="tRNA modification GTPase MnmE"/>
    <property type="match status" value="1"/>
</dbReference>
<dbReference type="FunFam" id="3.40.50.300:FF:001376">
    <property type="entry name" value="tRNA modification GTPase MnmE"/>
    <property type="match status" value="1"/>
</dbReference>
<dbReference type="Gene3D" id="3.40.50.300">
    <property type="entry name" value="P-loop containing nucleotide triphosphate hydrolases"/>
    <property type="match status" value="1"/>
</dbReference>
<dbReference type="Gene3D" id="3.30.1360.120">
    <property type="entry name" value="Probable tRNA modification gtpase trme, domain 1"/>
    <property type="match status" value="1"/>
</dbReference>
<dbReference type="Gene3D" id="1.20.120.430">
    <property type="entry name" value="tRNA modification GTPase MnmE domain 2"/>
    <property type="match status" value="1"/>
</dbReference>
<dbReference type="HAMAP" id="MF_00379">
    <property type="entry name" value="GTPase_MnmE"/>
    <property type="match status" value="1"/>
</dbReference>
<dbReference type="InterPro" id="IPR031168">
    <property type="entry name" value="G_TrmE"/>
</dbReference>
<dbReference type="InterPro" id="IPR006073">
    <property type="entry name" value="GTP-bd"/>
</dbReference>
<dbReference type="InterPro" id="IPR018948">
    <property type="entry name" value="GTP-bd_TrmE_N"/>
</dbReference>
<dbReference type="InterPro" id="IPR004520">
    <property type="entry name" value="GTPase_MnmE"/>
</dbReference>
<dbReference type="InterPro" id="IPR027368">
    <property type="entry name" value="MnmE_dom2"/>
</dbReference>
<dbReference type="InterPro" id="IPR025867">
    <property type="entry name" value="MnmE_helical"/>
</dbReference>
<dbReference type="InterPro" id="IPR027417">
    <property type="entry name" value="P-loop_NTPase"/>
</dbReference>
<dbReference type="InterPro" id="IPR005225">
    <property type="entry name" value="Small_GTP-bd"/>
</dbReference>
<dbReference type="InterPro" id="IPR027266">
    <property type="entry name" value="TrmE/GcvT_dom1"/>
</dbReference>
<dbReference type="NCBIfam" id="TIGR00450">
    <property type="entry name" value="mnmE_trmE_thdF"/>
    <property type="match status" value="1"/>
</dbReference>
<dbReference type="NCBIfam" id="NF003661">
    <property type="entry name" value="PRK05291.1-3"/>
    <property type="match status" value="1"/>
</dbReference>
<dbReference type="NCBIfam" id="TIGR00231">
    <property type="entry name" value="small_GTP"/>
    <property type="match status" value="1"/>
</dbReference>
<dbReference type="PANTHER" id="PTHR42714">
    <property type="entry name" value="TRNA MODIFICATION GTPASE GTPBP3"/>
    <property type="match status" value="1"/>
</dbReference>
<dbReference type="PANTHER" id="PTHR42714:SF2">
    <property type="entry name" value="TRNA MODIFICATION GTPASE GTPBP3, MITOCHONDRIAL"/>
    <property type="match status" value="1"/>
</dbReference>
<dbReference type="Pfam" id="PF01926">
    <property type="entry name" value="MMR_HSR1"/>
    <property type="match status" value="1"/>
</dbReference>
<dbReference type="Pfam" id="PF12631">
    <property type="entry name" value="MnmE_helical"/>
    <property type="match status" value="1"/>
</dbReference>
<dbReference type="Pfam" id="PF10396">
    <property type="entry name" value="TrmE_N"/>
    <property type="match status" value="1"/>
</dbReference>
<dbReference type="PRINTS" id="PR00326">
    <property type="entry name" value="GTP1OBG"/>
</dbReference>
<dbReference type="SUPFAM" id="SSF52540">
    <property type="entry name" value="P-loop containing nucleoside triphosphate hydrolases"/>
    <property type="match status" value="1"/>
</dbReference>
<dbReference type="PROSITE" id="PS51709">
    <property type="entry name" value="G_TRME"/>
    <property type="match status" value="1"/>
</dbReference>
<evidence type="ECO:0000255" key="1">
    <source>
        <dbReference type="HAMAP-Rule" id="MF_00379"/>
    </source>
</evidence>
<proteinExistence type="inferred from homology"/>